<keyword id="KW-0002">3D-structure</keyword>
<keyword id="KW-0042">Antenna complex</keyword>
<keyword id="KW-0089">Bile pigment</keyword>
<keyword id="KW-0157">Chromophore</keyword>
<keyword id="KW-0903">Direct protein sequencing</keyword>
<keyword id="KW-0249">Electron transport</keyword>
<keyword id="KW-0472">Membrane</keyword>
<keyword id="KW-0488">Methylation</keyword>
<keyword id="KW-0602">Photosynthesis</keyword>
<keyword id="KW-0605">Phycobilisome</keyword>
<keyword id="KW-1185">Reference proteome</keyword>
<keyword id="KW-0793">Thylakoid</keyword>
<keyword id="KW-0813">Transport</keyword>
<sequence length="161" mass="17412">MSIVTKSIVNADAEARYLSPGELDRIKAFVTGGAARLRIAETLTGSRETIVKQAGDRLFQKRPDIVSPGGNAYGEEMTATCLRDMDYYLRLVTYGVVSGDVTPIEEIGLVGVREMYRSLGTPIEAVAQSVREMKEVASGLMSSDDAAEASAYFDFVIGKMS</sequence>
<proteinExistence type="evidence at protein level"/>
<reference key="1">
    <citation type="journal article" date="1992" name="J. Biol. Chem.">
        <title>Excitation energy transfer from phycocyanin to chlorophyll in an apcA-defective mutant of Synechocystis sp. PCC 6803.</title>
        <authorList>
            <person name="Su X."/>
            <person name="Goodman P."/>
            <person name="Bogorad L."/>
        </authorList>
    </citation>
    <scope>NUCLEOTIDE SEQUENCE [GENOMIC DNA]</scope>
</reference>
<reference key="2">
    <citation type="journal article" date="1996" name="DNA Res.">
        <title>Sequence analysis of the genome of the unicellular cyanobacterium Synechocystis sp. strain PCC6803. II. Sequence determination of the entire genome and assignment of potential protein-coding regions.</title>
        <authorList>
            <person name="Kaneko T."/>
            <person name="Sato S."/>
            <person name="Kotani H."/>
            <person name="Tanaka A."/>
            <person name="Asamizu E."/>
            <person name="Nakamura Y."/>
            <person name="Miyajima N."/>
            <person name="Hirosawa M."/>
            <person name="Sugiura M."/>
            <person name="Sasamoto S."/>
            <person name="Kimura T."/>
            <person name="Hosouchi T."/>
            <person name="Matsuno A."/>
            <person name="Muraki A."/>
            <person name="Nakazaki N."/>
            <person name="Naruo K."/>
            <person name="Okumura S."/>
            <person name="Shimpo S."/>
            <person name="Takeuchi C."/>
            <person name="Wada T."/>
            <person name="Watanabe A."/>
            <person name="Yamada M."/>
            <person name="Yasuda M."/>
            <person name="Tabata S."/>
        </authorList>
    </citation>
    <scope>NUCLEOTIDE SEQUENCE [LARGE SCALE GENOMIC DNA]</scope>
    <source>
        <strain>ATCC 27184 / PCC 6803 / Kazusa</strain>
    </source>
</reference>
<reference key="3">
    <citation type="journal article" date="1997" name="Electrophoresis">
        <title>Towards a proteome project of cyanobacterium Synechocystis sp. strain PCC6803: linking 130 protein spots with their respective genes.</title>
        <authorList>
            <person name="Sazuka T."/>
            <person name="Ohara O."/>
        </authorList>
    </citation>
    <scope>PROTEIN SEQUENCE OF 2-21</scope>
</reference>
<protein>
    <recommendedName>
        <fullName>Allophycocyanin alpha chain</fullName>
    </recommendedName>
</protein>
<dbReference type="EMBL" id="M77135">
    <property type="protein sequence ID" value="AAA27276.1"/>
    <property type="molecule type" value="Genomic_DNA"/>
</dbReference>
<dbReference type="EMBL" id="BA000022">
    <property type="protein sequence ID" value="BAA17874.1"/>
    <property type="molecule type" value="Genomic_DNA"/>
</dbReference>
<dbReference type="PIR" id="A44462">
    <property type="entry name" value="A44462"/>
</dbReference>
<dbReference type="PDB" id="7SC7">
    <property type="method" value="EM"/>
    <property type="resolution" value="2.80 A"/>
    <property type="chains" value="AA/AC/AH/AJ/AN/AP/AR/AV/AX/AZ/BH/BJ/BO/BQ/BU/BW/BY/CB/CD/CF/CP/CR/CT/CW/CY/DA/DG/DI/DK/DN=1-161"/>
</dbReference>
<dbReference type="PDB" id="7SC9">
    <property type="method" value="EM"/>
    <property type="resolution" value="2.60 A"/>
    <property type="chains" value="AA/AC/AH/AJ/AN/AP/AR/AV/AX/AZ/BI/BK/BP/BR/BV/BX/BZ/CC/CE/CG/CR/CT/CV/CY/DA/DC/DJ/DL/DN/DQ=1-161"/>
</dbReference>
<dbReference type="PDB" id="7SCB">
    <property type="method" value="EM"/>
    <property type="resolution" value="2.50 A"/>
    <property type="chains" value="AA/AC/AH/AJ/AN/AP/AR/AU/AW/AY=1-161"/>
</dbReference>
<dbReference type="PDB" id="7SCC">
    <property type="method" value="EM"/>
    <property type="resolution" value="2.60 A"/>
    <property type="chains" value="AA/AC/AE/AH/AJ/AL/AW/AY/BA/BD/BF/BH=1-161"/>
</dbReference>
<dbReference type="PDB" id="8TO2">
    <property type="method" value="EM"/>
    <property type="resolution" value="2.00 A"/>
    <property type="chains" value="D/F/H/J/L/N/f/h/j/l=1-161"/>
</dbReference>
<dbReference type="PDB" id="8TPJ">
    <property type="method" value="EM"/>
    <property type="resolution" value="2.10 A"/>
    <property type="chains" value="D/F/H/J/L/N=1-161"/>
</dbReference>
<dbReference type="PDBsum" id="7SC7"/>
<dbReference type="PDBsum" id="7SC9"/>
<dbReference type="PDBsum" id="7SCB"/>
<dbReference type="PDBsum" id="7SCC"/>
<dbReference type="PDBsum" id="8TO2"/>
<dbReference type="PDBsum" id="8TPJ"/>
<dbReference type="EMDB" id="EMD-25028"/>
<dbReference type="EMDB" id="EMD-25030"/>
<dbReference type="EMDB" id="EMD-25032"/>
<dbReference type="EMDB" id="EMD-25033"/>
<dbReference type="EMDB" id="EMD-41434"/>
<dbReference type="EMDB" id="EMD-41475"/>
<dbReference type="SMR" id="Q01951"/>
<dbReference type="IntAct" id="Q01951">
    <property type="interactions" value="3"/>
</dbReference>
<dbReference type="STRING" id="1148.gene:10498743"/>
<dbReference type="PaxDb" id="1148-1652957"/>
<dbReference type="EnsemblBacteria" id="BAA17874">
    <property type="protein sequence ID" value="BAA17874"/>
    <property type="gene ID" value="BAA17874"/>
</dbReference>
<dbReference type="KEGG" id="syn:slr2067"/>
<dbReference type="eggNOG" id="ENOG502Z7RG">
    <property type="taxonomic scope" value="Bacteria"/>
</dbReference>
<dbReference type="InParanoid" id="Q01951"/>
<dbReference type="PhylomeDB" id="Q01951"/>
<dbReference type="Proteomes" id="UP000001425">
    <property type="component" value="Chromosome"/>
</dbReference>
<dbReference type="GO" id="GO:0030089">
    <property type="term" value="C:phycobilisome"/>
    <property type="evidence" value="ECO:0000314"/>
    <property type="project" value="UniProtKB"/>
</dbReference>
<dbReference type="GO" id="GO:0031676">
    <property type="term" value="C:plasma membrane-derived thylakoid membrane"/>
    <property type="evidence" value="ECO:0007669"/>
    <property type="project" value="UniProtKB-SubCell"/>
</dbReference>
<dbReference type="GO" id="GO:0015979">
    <property type="term" value="P:photosynthesis"/>
    <property type="evidence" value="ECO:0007669"/>
    <property type="project" value="UniProtKB-KW"/>
</dbReference>
<dbReference type="CDD" id="cd12125">
    <property type="entry name" value="APC_alpha"/>
    <property type="match status" value="1"/>
</dbReference>
<dbReference type="FunFam" id="1.10.490.20:FF:000001">
    <property type="entry name" value="Allophycocyanin alpha chain"/>
    <property type="match status" value="1"/>
</dbReference>
<dbReference type="Gene3D" id="1.10.490.20">
    <property type="entry name" value="Phycocyanins"/>
    <property type="match status" value="1"/>
</dbReference>
<dbReference type="InterPro" id="IPR009050">
    <property type="entry name" value="Globin-like_sf"/>
</dbReference>
<dbReference type="InterPro" id="IPR012128">
    <property type="entry name" value="Phycobilisome_asu/bsu"/>
</dbReference>
<dbReference type="InterPro" id="IPR038719">
    <property type="entry name" value="Phycobilisome_asu/bsu_sf"/>
</dbReference>
<dbReference type="PANTHER" id="PTHR34011:SF2">
    <property type="entry name" value="ALLOPHYCOCYANIN ALPHA CHAIN"/>
    <property type="match status" value="1"/>
</dbReference>
<dbReference type="PANTHER" id="PTHR34011">
    <property type="entry name" value="PHYCOBILISOME 32.1 KDA LINKER POLYPEPTIDE, PHYCOCYANIN-ASSOCIATED, ROD 2-RELATED"/>
    <property type="match status" value="1"/>
</dbReference>
<dbReference type="Pfam" id="PF00502">
    <property type="entry name" value="Phycobilisome"/>
    <property type="match status" value="1"/>
</dbReference>
<dbReference type="PIRSF" id="PIRSF000081">
    <property type="entry name" value="Phycocyanin"/>
    <property type="match status" value="1"/>
</dbReference>
<dbReference type="SUPFAM" id="SSF46458">
    <property type="entry name" value="Globin-like"/>
    <property type="match status" value="1"/>
</dbReference>
<comment type="function">
    <text>Light-harvesting photosynthetic bile pigment-protein from the phycobiliprotein complex. Allophycocyanin has a maximum absorption at approximately 650 nanometers.</text>
</comment>
<comment type="subunit">
    <text evidence="1">Heterodimer of an alpha and a beta chain.</text>
</comment>
<comment type="subcellular location">
    <subcellularLocation>
        <location evidence="1">Cellular thylakoid membrane</location>
        <topology evidence="1">Peripheral membrane protein</topology>
        <orientation evidence="1">Cytoplasmic side</orientation>
    </subcellularLocation>
    <text evidence="1">Forms the core of the phycobilisome.</text>
</comment>
<comment type="PTM">
    <text evidence="1">Contains one covalently linked phycocyanobilin chromophore.</text>
</comment>
<comment type="similarity">
    <text evidence="2">Belongs to the phycobiliprotein family.</text>
</comment>
<evidence type="ECO:0000250" key="1"/>
<evidence type="ECO:0000305" key="2"/>
<evidence type="ECO:0007829" key="3">
    <source>
        <dbReference type="PDB" id="8TO2"/>
    </source>
</evidence>
<name>PHAA_SYNY3</name>
<feature type="initiator methionine" description="Removed" evidence="1">
    <location>
        <position position="1"/>
    </location>
</feature>
<feature type="chain" id="PRO_0000199078" description="Allophycocyanin alpha chain">
    <location>
        <begin position="2"/>
        <end position="161"/>
    </location>
</feature>
<feature type="binding site" description="covalent" evidence="1">
    <location>
        <position position="81"/>
    </location>
    <ligand>
        <name>(2R,3E)-phycocyanobilin</name>
        <dbReference type="ChEBI" id="CHEBI:85275"/>
    </ligand>
</feature>
<feature type="modified residue" description="N4-methylasparagine" evidence="1">
    <location>
        <position position="71"/>
    </location>
</feature>
<feature type="helix" evidence="3">
    <location>
        <begin position="3"/>
        <end position="13"/>
    </location>
</feature>
<feature type="helix" evidence="3">
    <location>
        <begin position="20"/>
        <end position="45"/>
    </location>
</feature>
<feature type="helix" evidence="3">
    <location>
        <begin position="47"/>
        <end position="61"/>
    </location>
</feature>
<feature type="turn" evidence="3">
    <location>
        <begin position="63"/>
        <end position="66"/>
    </location>
</feature>
<feature type="strand" evidence="3">
    <location>
        <begin position="70"/>
        <end position="72"/>
    </location>
</feature>
<feature type="helix" evidence="3">
    <location>
        <begin position="75"/>
        <end position="98"/>
    </location>
</feature>
<feature type="helix" evidence="3">
    <location>
        <begin position="102"/>
        <end position="108"/>
    </location>
</feature>
<feature type="helix" evidence="3">
    <location>
        <begin position="112"/>
        <end position="119"/>
    </location>
</feature>
<feature type="helix" evidence="3">
    <location>
        <begin position="123"/>
        <end position="138"/>
    </location>
</feature>
<feature type="helix" evidence="3">
    <location>
        <begin position="143"/>
        <end position="159"/>
    </location>
</feature>
<accession>Q01951</accession>
<gene>
    <name type="primary">apcA</name>
    <name type="ordered locus">slr2067</name>
</gene>
<organism>
    <name type="scientific">Synechocystis sp. (strain ATCC 27184 / PCC 6803 / Kazusa)</name>
    <dbReference type="NCBI Taxonomy" id="1111708"/>
    <lineage>
        <taxon>Bacteria</taxon>
        <taxon>Bacillati</taxon>
        <taxon>Cyanobacteriota</taxon>
        <taxon>Cyanophyceae</taxon>
        <taxon>Synechococcales</taxon>
        <taxon>Merismopediaceae</taxon>
        <taxon>Synechocystis</taxon>
    </lineage>
</organism>